<proteinExistence type="inferred from homology"/>
<gene>
    <name evidence="1" type="primary">pnp</name>
    <name type="ordered locus">MCCL_0864</name>
</gene>
<sequence>MSQEKKVFKTEWAGRPLIIETGQLAKQANGAVLVRYGDTVVLSTATASKEPRDVDFFPLMVNYEEKLYAAGKIPGGFNKREGRPGEDATLTSRLIDRPIRPLFPKGYRHDVQVISIVMSVDPDNSPEMAAMIGSSMALAVSDIPFEGPIAGVNVGLVDGELIINPDVQQREVSVLDLQVAGHFDAVNMVEAGAKEVAEDKMLEAIMFGHAEIKKLVEFQQSIIDEIQPVKSEFVPVEVDADLESKVEQLSESFGLSQAIQTQEKLAREENITAIKLKVIEAFEGEDEAVITAVNKKFDALIKEEVRRLITEEKVRPDGRRPDEIRPLDSEVGILPRVHGSGLFTRGQTQALSVATLGALGEHQIIDGLGVEEEKRYMHHYNFPNFSVGETGPIRAPGRREIGHGALGERALLQVIPDEKEFPYTIRVVSEVLESNGSSSQASICGSTLALMDAGVPIKAPVAGIAMGLVTKDENYTILSDIQGMEDALGDMDFKVAGTKEGITAIQMDIKINGLTEDILREALEQARVGRLHIMEHMLSTISEPRAELSQYAPKIEIIHINPDKIRDVIGPGGKKINEIIDATGVKLDIEQDGTVFIGSSDASMIEAAKKLIENIVREAEVGQIYMATVKRIEKFGAFVEIFPGKDALVHISQIALERINKVEDVVKLGDQFLVKVTEIDKQGRVNASRKVLLEEEKKASEEK</sequence>
<organism>
    <name type="scientific">Macrococcus caseolyticus (strain JCSC5402)</name>
    <name type="common">Macrococcoides caseolyticum</name>
    <dbReference type="NCBI Taxonomy" id="458233"/>
    <lineage>
        <taxon>Bacteria</taxon>
        <taxon>Bacillati</taxon>
        <taxon>Bacillota</taxon>
        <taxon>Bacilli</taxon>
        <taxon>Bacillales</taxon>
        <taxon>Staphylococcaceae</taxon>
        <taxon>Macrococcoides</taxon>
    </lineage>
</organism>
<dbReference type="EC" id="2.7.7.8" evidence="1"/>
<dbReference type="EMBL" id="AP009484">
    <property type="protein sequence ID" value="BAH17571.1"/>
    <property type="molecule type" value="Genomic_DNA"/>
</dbReference>
<dbReference type="RefSeq" id="WP_012656771.1">
    <property type="nucleotide sequence ID" value="NC_011999.1"/>
</dbReference>
<dbReference type="SMR" id="B9EBG0"/>
<dbReference type="STRING" id="458233.MCCL_0864"/>
<dbReference type="KEGG" id="mcl:MCCL_0864"/>
<dbReference type="eggNOG" id="COG1185">
    <property type="taxonomic scope" value="Bacteria"/>
</dbReference>
<dbReference type="HOGENOM" id="CLU_004217_2_2_9"/>
<dbReference type="OrthoDB" id="9804305at2"/>
<dbReference type="Proteomes" id="UP000001383">
    <property type="component" value="Chromosome"/>
</dbReference>
<dbReference type="GO" id="GO:0005829">
    <property type="term" value="C:cytosol"/>
    <property type="evidence" value="ECO:0007669"/>
    <property type="project" value="TreeGrafter"/>
</dbReference>
<dbReference type="GO" id="GO:0000175">
    <property type="term" value="F:3'-5'-RNA exonuclease activity"/>
    <property type="evidence" value="ECO:0007669"/>
    <property type="project" value="TreeGrafter"/>
</dbReference>
<dbReference type="GO" id="GO:0000287">
    <property type="term" value="F:magnesium ion binding"/>
    <property type="evidence" value="ECO:0007669"/>
    <property type="project" value="UniProtKB-UniRule"/>
</dbReference>
<dbReference type="GO" id="GO:0004654">
    <property type="term" value="F:polyribonucleotide nucleotidyltransferase activity"/>
    <property type="evidence" value="ECO:0007669"/>
    <property type="project" value="UniProtKB-UniRule"/>
</dbReference>
<dbReference type="GO" id="GO:0003723">
    <property type="term" value="F:RNA binding"/>
    <property type="evidence" value="ECO:0007669"/>
    <property type="project" value="UniProtKB-UniRule"/>
</dbReference>
<dbReference type="GO" id="GO:0006402">
    <property type="term" value="P:mRNA catabolic process"/>
    <property type="evidence" value="ECO:0007669"/>
    <property type="project" value="UniProtKB-UniRule"/>
</dbReference>
<dbReference type="GO" id="GO:0006396">
    <property type="term" value="P:RNA processing"/>
    <property type="evidence" value="ECO:0007669"/>
    <property type="project" value="InterPro"/>
</dbReference>
<dbReference type="CDD" id="cd02393">
    <property type="entry name" value="KH-I_PNPase"/>
    <property type="match status" value="1"/>
</dbReference>
<dbReference type="CDD" id="cd11363">
    <property type="entry name" value="RNase_PH_PNPase_1"/>
    <property type="match status" value="1"/>
</dbReference>
<dbReference type="CDD" id="cd11364">
    <property type="entry name" value="RNase_PH_PNPase_2"/>
    <property type="match status" value="1"/>
</dbReference>
<dbReference type="CDD" id="cd04472">
    <property type="entry name" value="S1_PNPase"/>
    <property type="match status" value="1"/>
</dbReference>
<dbReference type="FunFam" id="2.40.50.140:FF:000023">
    <property type="entry name" value="Polyribonucleotide nucleotidyltransferase"/>
    <property type="match status" value="1"/>
</dbReference>
<dbReference type="FunFam" id="3.30.1370.10:FF:000001">
    <property type="entry name" value="Polyribonucleotide nucleotidyltransferase"/>
    <property type="match status" value="1"/>
</dbReference>
<dbReference type="FunFam" id="3.30.230.70:FF:000001">
    <property type="entry name" value="Polyribonucleotide nucleotidyltransferase"/>
    <property type="match status" value="1"/>
</dbReference>
<dbReference type="FunFam" id="3.30.230.70:FF:000002">
    <property type="entry name" value="Polyribonucleotide nucleotidyltransferase"/>
    <property type="match status" value="1"/>
</dbReference>
<dbReference type="Gene3D" id="3.30.230.70">
    <property type="entry name" value="GHMP Kinase, N-terminal domain"/>
    <property type="match status" value="2"/>
</dbReference>
<dbReference type="Gene3D" id="3.30.1370.10">
    <property type="entry name" value="K Homology domain, type 1"/>
    <property type="match status" value="1"/>
</dbReference>
<dbReference type="Gene3D" id="2.40.50.140">
    <property type="entry name" value="Nucleic acid-binding proteins"/>
    <property type="match status" value="1"/>
</dbReference>
<dbReference type="HAMAP" id="MF_01595">
    <property type="entry name" value="PNPase"/>
    <property type="match status" value="1"/>
</dbReference>
<dbReference type="InterPro" id="IPR001247">
    <property type="entry name" value="ExoRNase_PH_dom1"/>
</dbReference>
<dbReference type="InterPro" id="IPR015847">
    <property type="entry name" value="ExoRNase_PH_dom2"/>
</dbReference>
<dbReference type="InterPro" id="IPR036345">
    <property type="entry name" value="ExoRNase_PH_dom2_sf"/>
</dbReference>
<dbReference type="InterPro" id="IPR004087">
    <property type="entry name" value="KH_dom"/>
</dbReference>
<dbReference type="InterPro" id="IPR004088">
    <property type="entry name" value="KH_dom_type_1"/>
</dbReference>
<dbReference type="InterPro" id="IPR036612">
    <property type="entry name" value="KH_dom_type_1_sf"/>
</dbReference>
<dbReference type="InterPro" id="IPR012340">
    <property type="entry name" value="NA-bd_OB-fold"/>
</dbReference>
<dbReference type="InterPro" id="IPR012162">
    <property type="entry name" value="PNPase"/>
</dbReference>
<dbReference type="InterPro" id="IPR027408">
    <property type="entry name" value="PNPase/RNase_PH_dom_sf"/>
</dbReference>
<dbReference type="InterPro" id="IPR015848">
    <property type="entry name" value="PNPase_PH_RNA-bd_bac/org-type"/>
</dbReference>
<dbReference type="InterPro" id="IPR036456">
    <property type="entry name" value="PNPase_PH_RNA-bd_sf"/>
</dbReference>
<dbReference type="InterPro" id="IPR020568">
    <property type="entry name" value="Ribosomal_Su5_D2-typ_SF"/>
</dbReference>
<dbReference type="InterPro" id="IPR003029">
    <property type="entry name" value="S1_domain"/>
</dbReference>
<dbReference type="NCBIfam" id="TIGR03591">
    <property type="entry name" value="polynuc_phos"/>
    <property type="match status" value="1"/>
</dbReference>
<dbReference type="NCBIfam" id="NF008805">
    <property type="entry name" value="PRK11824.1"/>
    <property type="match status" value="1"/>
</dbReference>
<dbReference type="PANTHER" id="PTHR11252">
    <property type="entry name" value="POLYRIBONUCLEOTIDE NUCLEOTIDYLTRANSFERASE"/>
    <property type="match status" value="1"/>
</dbReference>
<dbReference type="PANTHER" id="PTHR11252:SF0">
    <property type="entry name" value="POLYRIBONUCLEOTIDE NUCLEOTIDYLTRANSFERASE 1, MITOCHONDRIAL"/>
    <property type="match status" value="1"/>
</dbReference>
<dbReference type="Pfam" id="PF00013">
    <property type="entry name" value="KH_1"/>
    <property type="match status" value="1"/>
</dbReference>
<dbReference type="Pfam" id="PF03726">
    <property type="entry name" value="PNPase"/>
    <property type="match status" value="1"/>
</dbReference>
<dbReference type="Pfam" id="PF01138">
    <property type="entry name" value="RNase_PH"/>
    <property type="match status" value="2"/>
</dbReference>
<dbReference type="Pfam" id="PF03725">
    <property type="entry name" value="RNase_PH_C"/>
    <property type="match status" value="2"/>
</dbReference>
<dbReference type="Pfam" id="PF00575">
    <property type="entry name" value="S1"/>
    <property type="match status" value="1"/>
</dbReference>
<dbReference type="PIRSF" id="PIRSF005499">
    <property type="entry name" value="PNPase"/>
    <property type="match status" value="1"/>
</dbReference>
<dbReference type="SMART" id="SM00322">
    <property type="entry name" value="KH"/>
    <property type="match status" value="1"/>
</dbReference>
<dbReference type="SMART" id="SM00316">
    <property type="entry name" value="S1"/>
    <property type="match status" value="1"/>
</dbReference>
<dbReference type="SUPFAM" id="SSF54791">
    <property type="entry name" value="Eukaryotic type KH-domain (KH-domain type I)"/>
    <property type="match status" value="1"/>
</dbReference>
<dbReference type="SUPFAM" id="SSF50249">
    <property type="entry name" value="Nucleic acid-binding proteins"/>
    <property type="match status" value="1"/>
</dbReference>
<dbReference type="SUPFAM" id="SSF46915">
    <property type="entry name" value="Polynucleotide phosphorylase/guanosine pentaphosphate synthase (PNPase/GPSI), domain 3"/>
    <property type="match status" value="1"/>
</dbReference>
<dbReference type="SUPFAM" id="SSF55666">
    <property type="entry name" value="Ribonuclease PH domain 2-like"/>
    <property type="match status" value="2"/>
</dbReference>
<dbReference type="SUPFAM" id="SSF54211">
    <property type="entry name" value="Ribosomal protein S5 domain 2-like"/>
    <property type="match status" value="2"/>
</dbReference>
<dbReference type="PROSITE" id="PS50084">
    <property type="entry name" value="KH_TYPE_1"/>
    <property type="match status" value="1"/>
</dbReference>
<dbReference type="PROSITE" id="PS50126">
    <property type="entry name" value="S1"/>
    <property type="match status" value="1"/>
</dbReference>
<comment type="function">
    <text evidence="1">Involved in mRNA degradation. Catalyzes the phosphorolysis of single-stranded polyribonucleotides processively in the 3'- to 5'-direction.</text>
</comment>
<comment type="catalytic activity">
    <reaction evidence="1">
        <text>RNA(n+1) + phosphate = RNA(n) + a ribonucleoside 5'-diphosphate</text>
        <dbReference type="Rhea" id="RHEA:22096"/>
        <dbReference type="Rhea" id="RHEA-COMP:14527"/>
        <dbReference type="Rhea" id="RHEA-COMP:17342"/>
        <dbReference type="ChEBI" id="CHEBI:43474"/>
        <dbReference type="ChEBI" id="CHEBI:57930"/>
        <dbReference type="ChEBI" id="CHEBI:140395"/>
        <dbReference type="EC" id="2.7.7.8"/>
    </reaction>
</comment>
<comment type="cofactor">
    <cofactor evidence="1">
        <name>Mg(2+)</name>
        <dbReference type="ChEBI" id="CHEBI:18420"/>
    </cofactor>
</comment>
<comment type="subcellular location">
    <subcellularLocation>
        <location evidence="1">Cytoplasm</location>
    </subcellularLocation>
</comment>
<comment type="similarity">
    <text evidence="1">Belongs to the polyribonucleotide nucleotidyltransferase family.</text>
</comment>
<keyword id="KW-0963">Cytoplasm</keyword>
<keyword id="KW-0460">Magnesium</keyword>
<keyword id="KW-0479">Metal-binding</keyword>
<keyword id="KW-0548">Nucleotidyltransferase</keyword>
<keyword id="KW-1185">Reference proteome</keyword>
<keyword id="KW-0694">RNA-binding</keyword>
<keyword id="KW-0808">Transferase</keyword>
<protein>
    <recommendedName>
        <fullName evidence="1">Polyribonucleotide nucleotidyltransferase</fullName>
        <ecNumber evidence="1">2.7.7.8</ecNumber>
    </recommendedName>
    <alternativeName>
        <fullName evidence="1">Polynucleotide phosphorylase</fullName>
        <shortName evidence="1">PNPase</shortName>
    </alternativeName>
</protein>
<reference key="1">
    <citation type="journal article" date="2009" name="J. Bacteriol.">
        <title>Complete genome sequence of Macrococcus caseolyticus strain JCSCS5402, reflecting the ancestral genome of the human-pathogenic staphylococci.</title>
        <authorList>
            <person name="Baba T."/>
            <person name="Kuwahara-Arai K."/>
            <person name="Uchiyama I."/>
            <person name="Takeuchi F."/>
            <person name="Ito T."/>
            <person name="Hiramatsu K."/>
        </authorList>
    </citation>
    <scope>NUCLEOTIDE SEQUENCE [LARGE SCALE GENOMIC DNA]</scope>
    <source>
        <strain>JCSC5402</strain>
    </source>
</reference>
<accession>B9EBG0</accession>
<feature type="chain" id="PRO_1000185742" description="Polyribonucleotide nucleotidyltransferase">
    <location>
        <begin position="1"/>
        <end position="703"/>
    </location>
</feature>
<feature type="domain" description="KH" evidence="1">
    <location>
        <begin position="553"/>
        <end position="612"/>
    </location>
</feature>
<feature type="domain" description="S1 motif" evidence="1">
    <location>
        <begin position="622"/>
        <end position="690"/>
    </location>
</feature>
<feature type="binding site" evidence="1">
    <location>
        <position position="486"/>
    </location>
    <ligand>
        <name>Mg(2+)</name>
        <dbReference type="ChEBI" id="CHEBI:18420"/>
    </ligand>
</feature>
<feature type="binding site" evidence="1">
    <location>
        <position position="492"/>
    </location>
    <ligand>
        <name>Mg(2+)</name>
        <dbReference type="ChEBI" id="CHEBI:18420"/>
    </ligand>
</feature>
<name>PNP_MACCJ</name>
<evidence type="ECO:0000255" key="1">
    <source>
        <dbReference type="HAMAP-Rule" id="MF_01595"/>
    </source>
</evidence>